<reference key="1">
    <citation type="journal article" date="1992" name="J. Mol. Evol.">
        <title>The complete mitochondrial DNA sequence of the harbor seal, Phoca vitulina.</title>
        <authorList>
            <person name="Arnason U."/>
            <person name="Johnsson E."/>
        </authorList>
    </citation>
    <scope>NUCLEOTIDE SEQUENCE [GENOMIC DNA]</scope>
</reference>
<reference key="2">
    <citation type="journal article" date="2006" name="Mol. Phylogenet. Evol.">
        <title>Pinniped phylogeny and a new hypothesis for their origin and dispersal.</title>
        <authorList>
            <person name="Arnason U."/>
            <person name="Gullberg A."/>
            <person name="Janke A."/>
            <person name="Kullberg M."/>
            <person name="Lehman N."/>
            <person name="Petrov E.A."/>
            <person name="Vainola R."/>
        </authorList>
    </citation>
    <scope>NUCLEOTIDE SEQUENCE [GENOMIC DNA]</scope>
</reference>
<sequence length="98" mass="10854">MSMVYANIFLAFIMSLMGLLMYRSHLMSSLLCLEGMMLSLFVMMTVTILNNHFTLASMAPIILLVFAACEAALGLSLLVMVSNTYGTDYVQNLNLLQC</sequence>
<name>NU4LM_PHOVI</name>
<organism>
    <name type="scientific">Phoca vitulina</name>
    <name type="common">Harbor seal</name>
    <dbReference type="NCBI Taxonomy" id="9720"/>
    <lineage>
        <taxon>Eukaryota</taxon>
        <taxon>Metazoa</taxon>
        <taxon>Chordata</taxon>
        <taxon>Craniata</taxon>
        <taxon>Vertebrata</taxon>
        <taxon>Euteleostomi</taxon>
        <taxon>Mammalia</taxon>
        <taxon>Eutheria</taxon>
        <taxon>Laurasiatheria</taxon>
        <taxon>Carnivora</taxon>
        <taxon>Caniformia</taxon>
        <taxon>Pinnipedia</taxon>
        <taxon>Phocidae</taxon>
        <taxon>Phocinae</taxon>
        <taxon>Phoca</taxon>
    </lineage>
</organism>
<evidence type="ECO:0000250" key="1">
    <source>
        <dbReference type="UniProtKB" id="P03901"/>
    </source>
</evidence>
<evidence type="ECO:0000250" key="2">
    <source>
        <dbReference type="UniProtKB" id="P03902"/>
    </source>
</evidence>
<evidence type="ECO:0000255" key="3"/>
<evidence type="ECO:0000305" key="4"/>
<geneLocation type="mitochondrion"/>
<accession>P68310</accession>
<accession>Q00544</accession>
<accession>Q08H11</accession>
<protein>
    <recommendedName>
        <fullName>NADH-ubiquinone oxidoreductase chain 4L</fullName>
        <ecNumber>7.1.1.2</ecNumber>
    </recommendedName>
    <alternativeName>
        <fullName>NADH dehydrogenase subunit 4L</fullName>
    </alternativeName>
</protein>
<keyword id="KW-0249">Electron transport</keyword>
<keyword id="KW-0472">Membrane</keyword>
<keyword id="KW-0496">Mitochondrion</keyword>
<keyword id="KW-0999">Mitochondrion inner membrane</keyword>
<keyword id="KW-0520">NAD</keyword>
<keyword id="KW-0679">Respiratory chain</keyword>
<keyword id="KW-1278">Translocase</keyword>
<keyword id="KW-0812">Transmembrane</keyword>
<keyword id="KW-1133">Transmembrane helix</keyword>
<keyword id="KW-0813">Transport</keyword>
<keyword id="KW-0830">Ubiquinone</keyword>
<feature type="chain" id="PRO_0000118470" description="NADH-ubiquinone oxidoreductase chain 4L">
    <location>
        <begin position="1"/>
        <end position="98"/>
    </location>
</feature>
<feature type="transmembrane region" description="Helical" evidence="3">
    <location>
        <begin position="1"/>
        <end position="21"/>
    </location>
</feature>
<feature type="transmembrane region" description="Helical" evidence="3">
    <location>
        <begin position="29"/>
        <end position="49"/>
    </location>
</feature>
<feature type="transmembrane region" description="Helical" evidence="3">
    <location>
        <begin position="61"/>
        <end position="81"/>
    </location>
</feature>
<proteinExistence type="inferred from homology"/>
<gene>
    <name type="primary">MT-ND4L</name>
    <name type="synonym">MTND4L</name>
    <name type="synonym">NADH4L</name>
    <name type="synonym">ND4L</name>
</gene>
<comment type="function">
    <text evidence="1">Core subunit of the mitochondrial membrane respiratory chain NADH dehydrogenase (Complex I) which catalyzes electron transfer from NADH through the respiratory chain, using ubiquinone as an electron acceptor. Part of the enzyme membrane arm which is embedded in the lipid bilayer and involved in proton translocation.</text>
</comment>
<comment type="catalytic activity">
    <reaction evidence="1">
        <text>a ubiquinone + NADH + 5 H(+)(in) = a ubiquinol + NAD(+) + 4 H(+)(out)</text>
        <dbReference type="Rhea" id="RHEA:29091"/>
        <dbReference type="Rhea" id="RHEA-COMP:9565"/>
        <dbReference type="Rhea" id="RHEA-COMP:9566"/>
        <dbReference type="ChEBI" id="CHEBI:15378"/>
        <dbReference type="ChEBI" id="CHEBI:16389"/>
        <dbReference type="ChEBI" id="CHEBI:17976"/>
        <dbReference type="ChEBI" id="CHEBI:57540"/>
        <dbReference type="ChEBI" id="CHEBI:57945"/>
        <dbReference type="EC" id="7.1.1.2"/>
    </reaction>
    <physiologicalReaction direction="left-to-right" evidence="1">
        <dbReference type="Rhea" id="RHEA:29092"/>
    </physiologicalReaction>
</comment>
<comment type="subunit">
    <text evidence="2">Core subunit of respiratory chain NADH dehydrogenase (Complex I) which is composed of 45 different subunits.</text>
</comment>
<comment type="subcellular location">
    <subcellularLocation>
        <location evidence="2">Mitochondrion inner membrane</location>
        <topology evidence="3">Multi-pass membrane protein</topology>
    </subcellularLocation>
</comment>
<comment type="similarity">
    <text evidence="4">Belongs to the complex I subunit 4L family.</text>
</comment>
<dbReference type="EC" id="7.1.1.2"/>
<dbReference type="EMBL" id="X63726">
    <property type="protein sequence ID" value="CAA45265.1"/>
    <property type="molecule type" value="Genomic_DNA"/>
</dbReference>
<dbReference type="EMBL" id="AM181032">
    <property type="protein sequence ID" value="CAJ57087.1"/>
    <property type="molecule type" value="Genomic_DNA"/>
</dbReference>
<dbReference type="PIR" id="S26159">
    <property type="entry name" value="S26159"/>
</dbReference>
<dbReference type="RefSeq" id="NP_006936.1">
    <property type="nucleotide sequence ID" value="NC_001325.1"/>
</dbReference>
<dbReference type="SMR" id="P68310"/>
<dbReference type="GeneID" id="807654"/>
<dbReference type="CTD" id="4539"/>
<dbReference type="OrthoDB" id="19063at33554"/>
<dbReference type="GO" id="GO:0005743">
    <property type="term" value="C:mitochondrial inner membrane"/>
    <property type="evidence" value="ECO:0000250"/>
    <property type="project" value="UniProtKB"/>
</dbReference>
<dbReference type="GO" id="GO:0045271">
    <property type="term" value="C:respiratory chain complex I"/>
    <property type="evidence" value="ECO:0000250"/>
    <property type="project" value="UniProtKB"/>
</dbReference>
<dbReference type="GO" id="GO:0008137">
    <property type="term" value="F:NADH dehydrogenase (ubiquinone) activity"/>
    <property type="evidence" value="ECO:0000250"/>
    <property type="project" value="UniProtKB"/>
</dbReference>
<dbReference type="GO" id="GO:0042773">
    <property type="term" value="P:ATP synthesis coupled electron transport"/>
    <property type="evidence" value="ECO:0007669"/>
    <property type="project" value="InterPro"/>
</dbReference>
<dbReference type="FunFam" id="1.10.287.3510:FF:000002">
    <property type="entry name" value="NADH-ubiquinone oxidoreductase chain 4L"/>
    <property type="match status" value="1"/>
</dbReference>
<dbReference type="Gene3D" id="1.10.287.3510">
    <property type="match status" value="1"/>
</dbReference>
<dbReference type="InterPro" id="IPR001133">
    <property type="entry name" value="NADH_UbQ_OxRdtase_chain4L/K"/>
</dbReference>
<dbReference type="InterPro" id="IPR039428">
    <property type="entry name" value="NUOK/Mnh_C1-like"/>
</dbReference>
<dbReference type="PANTHER" id="PTHR11434:SF0">
    <property type="entry name" value="NADH-UBIQUINONE OXIDOREDUCTASE CHAIN 4L"/>
    <property type="match status" value="1"/>
</dbReference>
<dbReference type="PANTHER" id="PTHR11434">
    <property type="entry name" value="NADH-UBIQUINONE OXIDOREDUCTASE SUBUNIT ND4L"/>
    <property type="match status" value="1"/>
</dbReference>
<dbReference type="Pfam" id="PF00420">
    <property type="entry name" value="Oxidored_q2"/>
    <property type="match status" value="1"/>
</dbReference>